<reference key="1">
    <citation type="journal article" date="2005" name="J. Infect. Dis.">
        <title>Genome sequence of a serotype M28 strain of group A Streptococcus: potential new insights into puerperal sepsis and bacterial disease specificity.</title>
        <authorList>
            <person name="Green N.M."/>
            <person name="Zhang S."/>
            <person name="Porcella S.F."/>
            <person name="Nagiec M.J."/>
            <person name="Barbian K.D."/>
            <person name="Beres S.B."/>
            <person name="Lefebvre R.B."/>
            <person name="Musser J.M."/>
        </authorList>
    </citation>
    <scope>NUCLEOTIDE SEQUENCE [LARGE SCALE GENOMIC DNA]</scope>
    <source>
        <strain>MGAS6180</strain>
    </source>
</reference>
<gene>
    <name evidence="1" type="primary">tsf</name>
    <name type="ordered locus">M28_Spy1765</name>
</gene>
<dbReference type="EMBL" id="CP000056">
    <property type="protein sequence ID" value="AAX72875.1"/>
    <property type="status" value="ALT_INIT"/>
    <property type="molecule type" value="Genomic_DNA"/>
</dbReference>
<dbReference type="RefSeq" id="WP_002982258.1">
    <property type="nucleotide sequence ID" value="NC_007296.2"/>
</dbReference>
<dbReference type="SMR" id="Q48QY5"/>
<dbReference type="GeneID" id="69901553"/>
<dbReference type="KEGG" id="spb:M28_Spy1765"/>
<dbReference type="HOGENOM" id="CLU_047155_0_1_9"/>
<dbReference type="GO" id="GO:0005737">
    <property type="term" value="C:cytoplasm"/>
    <property type="evidence" value="ECO:0007669"/>
    <property type="project" value="UniProtKB-SubCell"/>
</dbReference>
<dbReference type="GO" id="GO:0003746">
    <property type="term" value="F:translation elongation factor activity"/>
    <property type="evidence" value="ECO:0007669"/>
    <property type="project" value="UniProtKB-UniRule"/>
</dbReference>
<dbReference type="CDD" id="cd14275">
    <property type="entry name" value="UBA_EF-Ts"/>
    <property type="match status" value="1"/>
</dbReference>
<dbReference type="FunFam" id="1.10.286.20:FF:000004">
    <property type="entry name" value="Elongation factor Ts"/>
    <property type="match status" value="1"/>
</dbReference>
<dbReference type="FunFam" id="1.10.8.10:FF:000001">
    <property type="entry name" value="Elongation factor Ts"/>
    <property type="match status" value="1"/>
</dbReference>
<dbReference type="FunFam" id="3.30.479.20:FF:000013">
    <property type="entry name" value="Elongation factor Ts"/>
    <property type="match status" value="1"/>
</dbReference>
<dbReference type="Gene3D" id="1.10.286.20">
    <property type="match status" value="1"/>
</dbReference>
<dbReference type="Gene3D" id="1.10.8.10">
    <property type="entry name" value="DNA helicase RuvA subunit, C-terminal domain"/>
    <property type="match status" value="1"/>
</dbReference>
<dbReference type="Gene3D" id="3.30.479.20">
    <property type="entry name" value="Elongation factor Ts, dimerisation domain"/>
    <property type="match status" value="2"/>
</dbReference>
<dbReference type="HAMAP" id="MF_00050">
    <property type="entry name" value="EF_Ts"/>
    <property type="match status" value="1"/>
</dbReference>
<dbReference type="InterPro" id="IPR036402">
    <property type="entry name" value="EF-Ts_dimer_sf"/>
</dbReference>
<dbReference type="InterPro" id="IPR001816">
    <property type="entry name" value="Transl_elong_EFTs/EF1B"/>
</dbReference>
<dbReference type="InterPro" id="IPR014039">
    <property type="entry name" value="Transl_elong_EFTs/EF1B_dimer"/>
</dbReference>
<dbReference type="InterPro" id="IPR018101">
    <property type="entry name" value="Transl_elong_Ts_CS"/>
</dbReference>
<dbReference type="InterPro" id="IPR009060">
    <property type="entry name" value="UBA-like_sf"/>
</dbReference>
<dbReference type="NCBIfam" id="TIGR00116">
    <property type="entry name" value="tsf"/>
    <property type="match status" value="1"/>
</dbReference>
<dbReference type="PANTHER" id="PTHR11741">
    <property type="entry name" value="ELONGATION FACTOR TS"/>
    <property type="match status" value="1"/>
</dbReference>
<dbReference type="PANTHER" id="PTHR11741:SF0">
    <property type="entry name" value="ELONGATION FACTOR TS, MITOCHONDRIAL"/>
    <property type="match status" value="1"/>
</dbReference>
<dbReference type="Pfam" id="PF00889">
    <property type="entry name" value="EF_TS"/>
    <property type="match status" value="1"/>
</dbReference>
<dbReference type="SUPFAM" id="SSF54713">
    <property type="entry name" value="Elongation factor Ts (EF-Ts), dimerisation domain"/>
    <property type="match status" value="1"/>
</dbReference>
<dbReference type="SUPFAM" id="SSF46934">
    <property type="entry name" value="UBA-like"/>
    <property type="match status" value="1"/>
</dbReference>
<dbReference type="PROSITE" id="PS01126">
    <property type="entry name" value="EF_TS_1"/>
    <property type="match status" value="1"/>
</dbReference>
<dbReference type="PROSITE" id="PS01127">
    <property type="entry name" value="EF_TS_2"/>
    <property type="match status" value="1"/>
</dbReference>
<evidence type="ECO:0000255" key="1">
    <source>
        <dbReference type="HAMAP-Rule" id="MF_00050"/>
    </source>
</evidence>
<evidence type="ECO:0000305" key="2"/>
<proteinExistence type="inferred from homology"/>
<name>EFTS_STRPM</name>
<feature type="chain" id="PRO_0000241536" description="Elongation factor Ts">
    <location>
        <begin position="1"/>
        <end position="346"/>
    </location>
</feature>
<feature type="region of interest" description="Involved in Mg(2+) ion dislocation from EF-Tu" evidence="1">
    <location>
        <begin position="80"/>
        <end position="83"/>
    </location>
</feature>
<accession>Q48QY5</accession>
<sequence>MAEITAKLVKELREKSGAGVMDAKKALVETDGDMDKAVELLREKGMAKAAKKADRVAAEGLTGVYVHGNVAAVVEVNAETDFVAKNAQFVELVNATAKVIAEGKPANNDEALALVMPSGETLAEAYVNATATIGEKISFRRFALIEKTDEQHFGAYQHNGGRIGVISVVEGGDDALAKQVSMHIAAMKPTVLSYTELDAQFIKDELAQLNHAIELDNESRAMVDKPALPFLKYGSKAQLSDDVITAAEADIKAELAAEGKPEKIWDKIIPGKMDRFMLDNTKVDQAYTLLAQVYIMDDSKTVEAYLDSVNAKAIAFARFEVGEGIEKKANDFESEVAATMAAALNN</sequence>
<protein>
    <recommendedName>
        <fullName evidence="1">Elongation factor Ts</fullName>
        <shortName evidence="1">EF-Ts</shortName>
    </recommendedName>
</protein>
<keyword id="KW-0963">Cytoplasm</keyword>
<keyword id="KW-0251">Elongation factor</keyword>
<keyword id="KW-0648">Protein biosynthesis</keyword>
<comment type="function">
    <text evidence="1">Associates with the EF-Tu.GDP complex and induces the exchange of GDP to GTP. It remains bound to the aminoacyl-tRNA.EF-Tu.GTP complex up to the GTP hydrolysis stage on the ribosome.</text>
</comment>
<comment type="subcellular location">
    <subcellularLocation>
        <location evidence="1">Cytoplasm</location>
    </subcellularLocation>
</comment>
<comment type="similarity">
    <text evidence="1">Belongs to the EF-Ts family.</text>
</comment>
<comment type="sequence caution" evidence="2">
    <conflict type="erroneous initiation">
        <sequence resource="EMBL-CDS" id="AAX72875"/>
    </conflict>
</comment>
<organism>
    <name type="scientific">Streptococcus pyogenes serotype M28 (strain MGAS6180)</name>
    <dbReference type="NCBI Taxonomy" id="319701"/>
    <lineage>
        <taxon>Bacteria</taxon>
        <taxon>Bacillati</taxon>
        <taxon>Bacillota</taxon>
        <taxon>Bacilli</taxon>
        <taxon>Lactobacillales</taxon>
        <taxon>Streptococcaceae</taxon>
        <taxon>Streptococcus</taxon>
    </lineage>
</organism>